<organism>
    <name type="scientific">Streptomyces sp. (strain C5)</name>
    <dbReference type="NCBI Taxonomy" id="45212"/>
    <lineage>
        <taxon>Bacteria</taxon>
        <taxon>Bacillati</taxon>
        <taxon>Actinomycetota</taxon>
        <taxon>Actinomycetes</taxon>
        <taxon>Kitasatosporales</taxon>
        <taxon>Streptomycetaceae</taxon>
        <taxon>Streptomyces</taxon>
    </lineage>
</organism>
<reference key="1">
    <citation type="journal article" date="1996" name="J. Bacteriol.">
        <title>Isolation and characterization of a gene from Streptomyces sp. strain C5 that confers the ability to convert daunomycin to doxorubicin on Streptomyces lividans TK24.</title>
        <authorList>
            <person name="Dickens M.L."/>
            <person name="Strohl W.R."/>
        </authorList>
    </citation>
    <scope>NUCLEOTIDE SEQUENCE [GENOMIC DNA]</scope>
    <source>
        <strain>C5</strain>
    </source>
</reference>
<sequence>MTRFAPGAPAWFDLGSPDVAASADFYTGLFGWTATVVSDPGAGGYTTFSSDGKLVAAVARHQIDTPYHRPYGPGNDQHGMPAIWTVYFATNDADALTKRVETAGGDVIMTPMDVLGLGRMAVFADPSGAAFAVWRKGVMEGAEVTGVPGSVGWVELVTDDIGTARGFYRATLGLAPADTGRKGVTDPVWHIHDTPVAGTRELGTTGAVRPHWAVLFSVHDCDATVRRAVELGGSVENEPVDTPRGRRADLLDPHGAGFSVVELREAYPAAADGAS</sequence>
<keyword id="KW-0045">Antibiotic biosynthesis</keyword>
<keyword id="KW-0677">Repeat</keyword>
<dbReference type="EMBL" id="U50973">
    <property type="protein sequence ID" value="AAB08048.1"/>
    <property type="molecule type" value="Genomic_DNA"/>
</dbReference>
<dbReference type="SMR" id="Q55078"/>
<dbReference type="UniPathway" id="UPA00054"/>
<dbReference type="UniPathway" id="UPA01040"/>
<dbReference type="GO" id="GO:1901771">
    <property type="term" value="P:daunorubicin biosynthetic process"/>
    <property type="evidence" value="ECO:0000250"/>
    <property type="project" value="UniProtKB"/>
</dbReference>
<dbReference type="CDD" id="cd07247">
    <property type="entry name" value="SgaA_N_like"/>
    <property type="match status" value="2"/>
</dbReference>
<dbReference type="FunFam" id="3.10.180.10:FF:000067">
    <property type="entry name" value="Anthracycline biosynthesis protein DauV"/>
    <property type="match status" value="1"/>
</dbReference>
<dbReference type="Gene3D" id="3.10.180.10">
    <property type="entry name" value="2,3-Dihydroxybiphenyl 1,2-Dioxygenase, domain 1"/>
    <property type="match status" value="2"/>
</dbReference>
<dbReference type="InterPro" id="IPR052164">
    <property type="entry name" value="Anthracycline_SecMetBiosynth"/>
</dbReference>
<dbReference type="InterPro" id="IPR029068">
    <property type="entry name" value="Glyas_Bleomycin-R_OHBP_Dase"/>
</dbReference>
<dbReference type="InterPro" id="IPR004360">
    <property type="entry name" value="Glyas_Fos-R_dOase_dom"/>
</dbReference>
<dbReference type="InterPro" id="IPR037523">
    <property type="entry name" value="VOC"/>
</dbReference>
<dbReference type="PANTHER" id="PTHR33993:SF10">
    <property type="entry name" value="CONSERVED PROTEIN"/>
    <property type="match status" value="1"/>
</dbReference>
<dbReference type="PANTHER" id="PTHR33993">
    <property type="entry name" value="GLYOXALASE-RELATED"/>
    <property type="match status" value="1"/>
</dbReference>
<dbReference type="Pfam" id="PF00903">
    <property type="entry name" value="Glyoxalase"/>
    <property type="match status" value="2"/>
</dbReference>
<dbReference type="SUPFAM" id="SSF54593">
    <property type="entry name" value="Glyoxalase/Bleomycin resistance protein/Dihydroxybiphenyl dioxygenase"/>
    <property type="match status" value="2"/>
</dbReference>
<dbReference type="PROSITE" id="PS51819">
    <property type="entry name" value="VOC"/>
    <property type="match status" value="2"/>
</dbReference>
<name>DNRV_STRS5</name>
<protein>
    <recommendedName>
        <fullName>Anthracycline biosynthesis protein DauV</fullName>
    </recommendedName>
</protein>
<accession>Q55078</accession>
<feature type="chain" id="PRO_0000425687" description="Anthracycline biosynthesis protein DauV">
    <location>
        <begin position="1"/>
        <end position="275"/>
    </location>
</feature>
<feature type="domain" description="VOC 1" evidence="2">
    <location>
        <begin position="8"/>
        <end position="136"/>
    </location>
</feature>
<feature type="domain" description="VOC 2" evidence="2">
    <location>
        <begin position="150"/>
        <end position="263"/>
    </location>
</feature>
<comment type="function">
    <text evidence="1">Involved in the biosynthesis of the anthracyclines carminomycin and daunorubicin (daunomycin) which are aromatic polyketide antibiotics that exhibit high cytotoxicity and are widely applied in the chemotherapy of a variety of cancers. Acts jointly with DoxA in the conversion of 13-deoxycarminomycin and 13-deoxydaunorubicin to yield carminomycin and daunorubicin, respectively (By similarity).</text>
</comment>
<comment type="pathway">
    <text>Antibiotic biosynthesis; daunorubicin biosynthesis.</text>
</comment>
<comment type="pathway">
    <text>Antibiotic biosynthesis; carminomycin biosynthesis.</text>
</comment>
<proteinExistence type="inferred from homology"/>
<evidence type="ECO:0000250" key="1"/>
<evidence type="ECO:0000255" key="2">
    <source>
        <dbReference type="PROSITE-ProRule" id="PRU01163"/>
    </source>
</evidence>
<gene>
    <name type="primary">dauV</name>
</gene>